<reference key="1">
    <citation type="journal article" date="2006" name="Environ. Microbiol.">
        <title>Whole genome analysis of the marine Bacteroidetes'Gramella forsetii' reveals adaptations to degradation of polymeric organic matter.</title>
        <authorList>
            <person name="Bauer M."/>
            <person name="Kube M."/>
            <person name="Teeling H."/>
            <person name="Richter M."/>
            <person name="Lombardot T."/>
            <person name="Allers E."/>
            <person name="Wuerdemann C.A."/>
            <person name="Quast C."/>
            <person name="Kuhl H."/>
            <person name="Knaust F."/>
            <person name="Woebken D."/>
            <person name="Bischof K."/>
            <person name="Mussmann M."/>
            <person name="Choudhuri J.V."/>
            <person name="Meyer F."/>
            <person name="Reinhardt R."/>
            <person name="Amann R.I."/>
            <person name="Gloeckner F.O."/>
        </authorList>
    </citation>
    <scope>NUCLEOTIDE SEQUENCE [LARGE SCALE GENOMIC DNA]</scope>
    <source>
        <strain>DSM 17595 / CGMCC 1.15422 / KT0803</strain>
    </source>
</reference>
<sequence>MSNYLINIIGPTAIGKTSLSIKVARHFITEIISADSRQFFKEMKIGTAVPDKDELAAATHHFIQHISIADAYSVGDFEKDAILKLKELFNKHKVAVMVGGSGLYIKAITEGLDDFPKVDPEIRRNLNQHLEEDGIDWLQKKLYVLDPEYYKTADVMNPHRLIRALEICIETGKPFSSFLNQKKPERNFKNITIGLMADREMIYDRINKRVDLMIRNGLIEEARELYPQKELNALNTVGYKELFSFFDGKTDLETAISEIKKNTRRFAKRQLTWFRKDPEIKWFEFDENSKNIFDYIESKINT</sequence>
<gene>
    <name evidence="1" type="primary">miaA</name>
    <name type="ordered locus">GFO_0660</name>
</gene>
<comment type="function">
    <text evidence="1">Catalyzes the transfer of a dimethylallyl group onto the adenine at position 37 in tRNAs that read codons beginning with uridine, leading to the formation of N6-(dimethylallyl)adenosine (i(6)A).</text>
</comment>
<comment type="catalytic activity">
    <reaction evidence="1">
        <text>adenosine(37) in tRNA + dimethylallyl diphosphate = N(6)-dimethylallyladenosine(37) in tRNA + diphosphate</text>
        <dbReference type="Rhea" id="RHEA:26482"/>
        <dbReference type="Rhea" id="RHEA-COMP:10162"/>
        <dbReference type="Rhea" id="RHEA-COMP:10375"/>
        <dbReference type="ChEBI" id="CHEBI:33019"/>
        <dbReference type="ChEBI" id="CHEBI:57623"/>
        <dbReference type="ChEBI" id="CHEBI:74411"/>
        <dbReference type="ChEBI" id="CHEBI:74415"/>
        <dbReference type="EC" id="2.5.1.75"/>
    </reaction>
</comment>
<comment type="cofactor">
    <cofactor evidence="1">
        <name>Mg(2+)</name>
        <dbReference type="ChEBI" id="CHEBI:18420"/>
    </cofactor>
</comment>
<comment type="subunit">
    <text evidence="1">Monomer.</text>
</comment>
<comment type="similarity">
    <text evidence="1">Belongs to the IPP transferase family.</text>
</comment>
<keyword id="KW-0067">ATP-binding</keyword>
<keyword id="KW-0460">Magnesium</keyword>
<keyword id="KW-0547">Nucleotide-binding</keyword>
<keyword id="KW-0808">Transferase</keyword>
<keyword id="KW-0819">tRNA processing</keyword>
<name>MIAA_CHRFK</name>
<accession>A0LZ43</accession>
<feature type="chain" id="PRO_0000377176" description="tRNA dimethylallyltransferase">
    <location>
        <begin position="1"/>
        <end position="302"/>
    </location>
</feature>
<feature type="region of interest" description="Interaction with substrate tRNA" evidence="1">
    <location>
        <begin position="35"/>
        <end position="38"/>
    </location>
</feature>
<feature type="binding site" evidence="1">
    <location>
        <begin position="10"/>
        <end position="17"/>
    </location>
    <ligand>
        <name>ATP</name>
        <dbReference type="ChEBI" id="CHEBI:30616"/>
    </ligand>
</feature>
<feature type="binding site" evidence="1">
    <location>
        <begin position="12"/>
        <end position="17"/>
    </location>
    <ligand>
        <name>substrate</name>
    </ligand>
</feature>
<feature type="site" description="Interaction with substrate tRNA" evidence="1">
    <location>
        <position position="101"/>
    </location>
</feature>
<feature type="site" description="Interaction with substrate tRNA" evidence="1">
    <location>
        <position position="123"/>
    </location>
</feature>
<dbReference type="EC" id="2.5.1.75" evidence="1"/>
<dbReference type="EMBL" id="CU207366">
    <property type="protein sequence ID" value="CAL65638.1"/>
    <property type="molecule type" value="Genomic_DNA"/>
</dbReference>
<dbReference type="RefSeq" id="WP_011708575.1">
    <property type="nucleotide sequence ID" value="NC_008571.1"/>
</dbReference>
<dbReference type="SMR" id="A0LZ43"/>
<dbReference type="STRING" id="411154.GFO_0660"/>
<dbReference type="KEGG" id="gfo:GFO_0660"/>
<dbReference type="eggNOG" id="COG0324">
    <property type="taxonomic scope" value="Bacteria"/>
</dbReference>
<dbReference type="HOGENOM" id="CLU_032616_0_1_10"/>
<dbReference type="OrthoDB" id="9776390at2"/>
<dbReference type="Proteomes" id="UP000000755">
    <property type="component" value="Chromosome"/>
</dbReference>
<dbReference type="GO" id="GO:0005524">
    <property type="term" value="F:ATP binding"/>
    <property type="evidence" value="ECO:0007669"/>
    <property type="project" value="UniProtKB-UniRule"/>
</dbReference>
<dbReference type="GO" id="GO:0052381">
    <property type="term" value="F:tRNA dimethylallyltransferase activity"/>
    <property type="evidence" value="ECO:0007669"/>
    <property type="project" value="UniProtKB-UniRule"/>
</dbReference>
<dbReference type="GO" id="GO:0006400">
    <property type="term" value="P:tRNA modification"/>
    <property type="evidence" value="ECO:0007669"/>
    <property type="project" value="TreeGrafter"/>
</dbReference>
<dbReference type="Gene3D" id="1.10.20.140">
    <property type="match status" value="1"/>
</dbReference>
<dbReference type="Gene3D" id="3.40.50.300">
    <property type="entry name" value="P-loop containing nucleotide triphosphate hydrolases"/>
    <property type="match status" value="1"/>
</dbReference>
<dbReference type="HAMAP" id="MF_00185">
    <property type="entry name" value="IPP_trans"/>
    <property type="match status" value="1"/>
</dbReference>
<dbReference type="InterPro" id="IPR039657">
    <property type="entry name" value="Dimethylallyltransferase"/>
</dbReference>
<dbReference type="InterPro" id="IPR018022">
    <property type="entry name" value="IPT"/>
</dbReference>
<dbReference type="InterPro" id="IPR027417">
    <property type="entry name" value="P-loop_NTPase"/>
</dbReference>
<dbReference type="NCBIfam" id="TIGR00174">
    <property type="entry name" value="miaA"/>
    <property type="match status" value="1"/>
</dbReference>
<dbReference type="PANTHER" id="PTHR11088">
    <property type="entry name" value="TRNA DIMETHYLALLYLTRANSFERASE"/>
    <property type="match status" value="1"/>
</dbReference>
<dbReference type="PANTHER" id="PTHR11088:SF60">
    <property type="entry name" value="TRNA DIMETHYLALLYLTRANSFERASE"/>
    <property type="match status" value="1"/>
</dbReference>
<dbReference type="Pfam" id="PF01715">
    <property type="entry name" value="IPPT"/>
    <property type="match status" value="1"/>
</dbReference>
<dbReference type="SUPFAM" id="SSF52540">
    <property type="entry name" value="P-loop containing nucleoside triphosphate hydrolases"/>
    <property type="match status" value="1"/>
</dbReference>
<organism>
    <name type="scientific">Christiangramia forsetii (strain DSM 17595 / CGMCC 1.15422 / KT0803)</name>
    <name type="common">Gramella forsetii</name>
    <dbReference type="NCBI Taxonomy" id="411154"/>
    <lineage>
        <taxon>Bacteria</taxon>
        <taxon>Pseudomonadati</taxon>
        <taxon>Bacteroidota</taxon>
        <taxon>Flavobacteriia</taxon>
        <taxon>Flavobacteriales</taxon>
        <taxon>Flavobacteriaceae</taxon>
        <taxon>Christiangramia</taxon>
    </lineage>
</organism>
<protein>
    <recommendedName>
        <fullName evidence="1">tRNA dimethylallyltransferase</fullName>
        <ecNumber evidence="1">2.5.1.75</ecNumber>
    </recommendedName>
    <alternativeName>
        <fullName evidence="1">Dimethylallyl diphosphate:tRNA dimethylallyltransferase</fullName>
        <shortName evidence="1">DMAPP:tRNA dimethylallyltransferase</shortName>
        <shortName evidence="1">DMATase</shortName>
    </alternativeName>
    <alternativeName>
        <fullName evidence="1">Isopentenyl-diphosphate:tRNA isopentenyltransferase</fullName>
        <shortName evidence="1">IPP transferase</shortName>
        <shortName evidence="1">IPPT</shortName>
        <shortName evidence="1">IPTase</shortName>
    </alternativeName>
</protein>
<proteinExistence type="inferred from homology"/>
<evidence type="ECO:0000255" key="1">
    <source>
        <dbReference type="HAMAP-Rule" id="MF_00185"/>
    </source>
</evidence>